<evidence type="ECO:0000255" key="1">
    <source>
        <dbReference type="HAMAP-Rule" id="MF_00046"/>
    </source>
</evidence>
<gene>
    <name evidence="1" type="primary">murC</name>
    <name type="ordered locus">RPA3529</name>
</gene>
<comment type="function">
    <text evidence="1">Cell wall formation.</text>
</comment>
<comment type="catalytic activity">
    <reaction evidence="1">
        <text>UDP-N-acetyl-alpha-D-muramate + L-alanine + ATP = UDP-N-acetyl-alpha-D-muramoyl-L-alanine + ADP + phosphate + H(+)</text>
        <dbReference type="Rhea" id="RHEA:23372"/>
        <dbReference type="ChEBI" id="CHEBI:15378"/>
        <dbReference type="ChEBI" id="CHEBI:30616"/>
        <dbReference type="ChEBI" id="CHEBI:43474"/>
        <dbReference type="ChEBI" id="CHEBI:57972"/>
        <dbReference type="ChEBI" id="CHEBI:70757"/>
        <dbReference type="ChEBI" id="CHEBI:83898"/>
        <dbReference type="ChEBI" id="CHEBI:456216"/>
        <dbReference type="EC" id="6.3.2.8"/>
    </reaction>
</comment>
<comment type="pathway">
    <text evidence="1">Cell wall biogenesis; peptidoglycan biosynthesis.</text>
</comment>
<comment type="subcellular location">
    <subcellularLocation>
        <location evidence="1">Cytoplasm</location>
    </subcellularLocation>
</comment>
<comment type="similarity">
    <text evidence="1">Belongs to the MurCDEF family.</text>
</comment>
<reference key="1">
    <citation type="journal article" date="2004" name="Nat. Biotechnol.">
        <title>Complete genome sequence of the metabolically versatile photosynthetic bacterium Rhodopseudomonas palustris.</title>
        <authorList>
            <person name="Larimer F.W."/>
            <person name="Chain P."/>
            <person name="Hauser L."/>
            <person name="Lamerdin J.E."/>
            <person name="Malfatti S."/>
            <person name="Do L."/>
            <person name="Land M.L."/>
            <person name="Pelletier D.A."/>
            <person name="Beatty J.T."/>
            <person name="Lang A.S."/>
            <person name="Tabita F.R."/>
            <person name="Gibson J.L."/>
            <person name="Hanson T.E."/>
            <person name="Bobst C."/>
            <person name="Torres y Torres J.L."/>
            <person name="Peres C."/>
            <person name="Harrison F.H."/>
            <person name="Gibson J."/>
            <person name="Harwood C.S."/>
        </authorList>
    </citation>
    <scope>NUCLEOTIDE SEQUENCE [LARGE SCALE GENOMIC DNA]</scope>
    <source>
        <strain>ATCC BAA-98 / CGA009</strain>
    </source>
</reference>
<organism>
    <name type="scientific">Rhodopseudomonas palustris (strain ATCC BAA-98 / CGA009)</name>
    <dbReference type="NCBI Taxonomy" id="258594"/>
    <lineage>
        <taxon>Bacteria</taxon>
        <taxon>Pseudomonadati</taxon>
        <taxon>Pseudomonadota</taxon>
        <taxon>Alphaproteobacteria</taxon>
        <taxon>Hyphomicrobiales</taxon>
        <taxon>Nitrobacteraceae</taxon>
        <taxon>Rhodopseudomonas</taxon>
    </lineage>
</organism>
<accession>P61682</accession>
<dbReference type="EC" id="6.3.2.8" evidence="1"/>
<dbReference type="EMBL" id="BX572604">
    <property type="protein sequence ID" value="CAE28970.1"/>
    <property type="molecule type" value="Genomic_DNA"/>
</dbReference>
<dbReference type="RefSeq" id="WP_011159069.1">
    <property type="nucleotide sequence ID" value="NZ_CP116810.1"/>
</dbReference>
<dbReference type="SMR" id="P61682"/>
<dbReference type="STRING" id="258594.RPA3529"/>
<dbReference type="GeneID" id="66894631"/>
<dbReference type="eggNOG" id="COG0773">
    <property type="taxonomic scope" value="Bacteria"/>
</dbReference>
<dbReference type="HOGENOM" id="CLU_028104_2_2_5"/>
<dbReference type="PhylomeDB" id="P61682"/>
<dbReference type="UniPathway" id="UPA00219"/>
<dbReference type="GO" id="GO:0005737">
    <property type="term" value="C:cytoplasm"/>
    <property type="evidence" value="ECO:0007669"/>
    <property type="project" value="UniProtKB-SubCell"/>
</dbReference>
<dbReference type="GO" id="GO:0005524">
    <property type="term" value="F:ATP binding"/>
    <property type="evidence" value="ECO:0007669"/>
    <property type="project" value="UniProtKB-UniRule"/>
</dbReference>
<dbReference type="GO" id="GO:0008763">
    <property type="term" value="F:UDP-N-acetylmuramate-L-alanine ligase activity"/>
    <property type="evidence" value="ECO:0007669"/>
    <property type="project" value="UniProtKB-UniRule"/>
</dbReference>
<dbReference type="GO" id="GO:0051301">
    <property type="term" value="P:cell division"/>
    <property type="evidence" value="ECO:0007669"/>
    <property type="project" value="UniProtKB-KW"/>
</dbReference>
<dbReference type="GO" id="GO:0071555">
    <property type="term" value="P:cell wall organization"/>
    <property type="evidence" value="ECO:0007669"/>
    <property type="project" value="UniProtKB-KW"/>
</dbReference>
<dbReference type="GO" id="GO:0009252">
    <property type="term" value="P:peptidoglycan biosynthetic process"/>
    <property type="evidence" value="ECO:0007669"/>
    <property type="project" value="UniProtKB-UniRule"/>
</dbReference>
<dbReference type="GO" id="GO:0008360">
    <property type="term" value="P:regulation of cell shape"/>
    <property type="evidence" value="ECO:0007669"/>
    <property type="project" value="UniProtKB-KW"/>
</dbReference>
<dbReference type="Gene3D" id="3.90.190.20">
    <property type="entry name" value="Mur ligase, C-terminal domain"/>
    <property type="match status" value="1"/>
</dbReference>
<dbReference type="Gene3D" id="3.40.1190.10">
    <property type="entry name" value="Mur-like, catalytic domain"/>
    <property type="match status" value="1"/>
</dbReference>
<dbReference type="Gene3D" id="3.40.50.720">
    <property type="entry name" value="NAD(P)-binding Rossmann-like Domain"/>
    <property type="match status" value="1"/>
</dbReference>
<dbReference type="HAMAP" id="MF_00046">
    <property type="entry name" value="MurC"/>
    <property type="match status" value="1"/>
</dbReference>
<dbReference type="InterPro" id="IPR036565">
    <property type="entry name" value="Mur-like_cat_sf"/>
</dbReference>
<dbReference type="InterPro" id="IPR004101">
    <property type="entry name" value="Mur_ligase_C"/>
</dbReference>
<dbReference type="InterPro" id="IPR036615">
    <property type="entry name" value="Mur_ligase_C_dom_sf"/>
</dbReference>
<dbReference type="InterPro" id="IPR013221">
    <property type="entry name" value="Mur_ligase_cen"/>
</dbReference>
<dbReference type="InterPro" id="IPR000713">
    <property type="entry name" value="Mur_ligase_N"/>
</dbReference>
<dbReference type="InterPro" id="IPR050061">
    <property type="entry name" value="MurCDEF_pg_biosynth"/>
</dbReference>
<dbReference type="InterPro" id="IPR005758">
    <property type="entry name" value="UDP-N-AcMur_Ala_ligase_MurC"/>
</dbReference>
<dbReference type="NCBIfam" id="TIGR01082">
    <property type="entry name" value="murC"/>
    <property type="match status" value="1"/>
</dbReference>
<dbReference type="PANTHER" id="PTHR43445:SF3">
    <property type="entry name" value="UDP-N-ACETYLMURAMATE--L-ALANINE LIGASE"/>
    <property type="match status" value="1"/>
</dbReference>
<dbReference type="PANTHER" id="PTHR43445">
    <property type="entry name" value="UDP-N-ACETYLMURAMATE--L-ALANINE LIGASE-RELATED"/>
    <property type="match status" value="1"/>
</dbReference>
<dbReference type="Pfam" id="PF01225">
    <property type="entry name" value="Mur_ligase"/>
    <property type="match status" value="1"/>
</dbReference>
<dbReference type="Pfam" id="PF02875">
    <property type="entry name" value="Mur_ligase_C"/>
    <property type="match status" value="1"/>
</dbReference>
<dbReference type="Pfam" id="PF08245">
    <property type="entry name" value="Mur_ligase_M"/>
    <property type="match status" value="1"/>
</dbReference>
<dbReference type="SUPFAM" id="SSF51984">
    <property type="entry name" value="MurCD N-terminal domain"/>
    <property type="match status" value="1"/>
</dbReference>
<dbReference type="SUPFAM" id="SSF53623">
    <property type="entry name" value="MurD-like peptide ligases, catalytic domain"/>
    <property type="match status" value="1"/>
</dbReference>
<dbReference type="SUPFAM" id="SSF53244">
    <property type="entry name" value="MurD-like peptide ligases, peptide-binding domain"/>
    <property type="match status" value="1"/>
</dbReference>
<name>MURC_RHOPA</name>
<keyword id="KW-0067">ATP-binding</keyword>
<keyword id="KW-0131">Cell cycle</keyword>
<keyword id="KW-0132">Cell division</keyword>
<keyword id="KW-0133">Cell shape</keyword>
<keyword id="KW-0961">Cell wall biogenesis/degradation</keyword>
<keyword id="KW-0963">Cytoplasm</keyword>
<keyword id="KW-0436">Ligase</keyword>
<keyword id="KW-0547">Nucleotide-binding</keyword>
<keyword id="KW-0573">Peptidoglycan synthesis</keyword>
<feature type="chain" id="PRO_0000182141" description="UDP-N-acetylmuramate--L-alanine ligase">
    <location>
        <begin position="1"/>
        <end position="467"/>
    </location>
</feature>
<feature type="binding site" evidence="1">
    <location>
        <begin position="114"/>
        <end position="120"/>
    </location>
    <ligand>
        <name>ATP</name>
        <dbReference type="ChEBI" id="CHEBI:30616"/>
    </ligand>
</feature>
<protein>
    <recommendedName>
        <fullName evidence="1">UDP-N-acetylmuramate--L-alanine ligase</fullName>
        <ecNumber evidence="1">6.3.2.8</ecNumber>
    </recommendedName>
    <alternativeName>
        <fullName evidence="1">UDP-N-acetylmuramoyl-L-alanine synthetase</fullName>
    </alternativeName>
</protein>
<sequence>MRLPRHIGPIHFVGIGGIGMSGIAEVLCNLGYTVQGSDASESANVNRLREKGIQIHVGHQADNIKGADVLVVSTAIKRDNPELLAARAQRIPVVRRAEMLAELMRLKSCVAIAGTHGKTTTTSMVAALLDAGDLDPTVINGGIINAYGTNARLGGGDWMVVEADESDGTFLKLPADVAIVTNVDPEHLDHFKTFDAVQDAFRNFVENVPFYGFAVMCIDHPVVQTLVGKIEDRRIITYGENPQADARLLDLAASGGGSTFKVAFRDRKAGTAHEIADLKLPMPGRHNALNATAAIAVAHELGLSDDTIRKALAAFGGVRRRFTKTGEWNGVTIIDDYGHHPVEIAAVLKAARQSTAGKVIAVVQPHRFSRLQSLFEEFCTCFNDADAVIVADVYPAGEAPIEGIDRDHFVLGLRAHGHRDVVALQDSASLAGVVAGLAHSGDYVVCLGAGNITQWAYALPGELKALG</sequence>
<proteinExistence type="inferred from homology"/>